<gene>
    <name evidence="1" type="primary">leuC</name>
    <name type="ordered locus">rrnAC0334</name>
</gene>
<evidence type="ECO:0000255" key="1">
    <source>
        <dbReference type="HAMAP-Rule" id="MF_01026"/>
    </source>
</evidence>
<feature type="chain" id="PRO_0000076851" description="3-isopropylmalate dehydratase large subunit">
    <location>
        <begin position="1"/>
        <end position="473"/>
    </location>
</feature>
<feature type="binding site" evidence="1">
    <location>
        <position position="348"/>
    </location>
    <ligand>
        <name>[4Fe-4S] cluster</name>
        <dbReference type="ChEBI" id="CHEBI:49883"/>
    </ligand>
</feature>
<feature type="binding site" evidence="1">
    <location>
        <position position="408"/>
    </location>
    <ligand>
        <name>[4Fe-4S] cluster</name>
        <dbReference type="ChEBI" id="CHEBI:49883"/>
    </ligand>
</feature>
<feature type="binding site" evidence="1">
    <location>
        <position position="411"/>
    </location>
    <ligand>
        <name>[4Fe-4S] cluster</name>
        <dbReference type="ChEBI" id="CHEBI:49883"/>
    </ligand>
</feature>
<proteinExistence type="inferred from homology"/>
<accession>Q5V518</accession>
<sequence>MSQGTLYDKVWDQHKVTTLPNGQDQLFVGLHLIHEVTSPQAFGMIKERGLEVARPDLTHATVDHIVPTANQDRPYSDDAAETMMAELEENVRDAGIQFSDPTTGDQGIVHVIGPEQGITQPGKTIVCGDSHTSTHGAFGALAFGIGTSQIRDVLATQTIAMEKQKVRKIEVTGELDEGVEAKDIILEIIRRLGTEGGVGYVYEYAGETIENLDMEGRMSICNMSIEGGARAGYVNPDETTYEWLEETDYFQEHPEKFEELKPYWESIRSDEDAEYDDVVEIDAGELDPVVTWGTTPGQGIGIDDPIPEPEDLADDKVDTARRAQKHMRVEPGETMEGYDIDVAFLGSCTNARLPDLRRAARIVKGREVADDVRAFVVPGSQRVQRAAEEEGLKDIFEEAGFEWRNAGCSMCLGMNEDQLEGDEACASSSNRNFVGRQGSKDGRTVLMNPRMVAAAAITGEVSDVRDLKEVTLA</sequence>
<keyword id="KW-0004">4Fe-4S</keyword>
<keyword id="KW-0028">Amino-acid biosynthesis</keyword>
<keyword id="KW-0100">Branched-chain amino acid biosynthesis</keyword>
<keyword id="KW-0408">Iron</keyword>
<keyword id="KW-0411">Iron-sulfur</keyword>
<keyword id="KW-0432">Leucine biosynthesis</keyword>
<keyword id="KW-0456">Lyase</keyword>
<keyword id="KW-0479">Metal-binding</keyword>
<keyword id="KW-1185">Reference proteome</keyword>
<organism>
    <name type="scientific">Haloarcula marismortui (strain ATCC 43049 / DSM 3752 / JCM 8966 / VKM B-1809)</name>
    <name type="common">Halobacterium marismortui</name>
    <dbReference type="NCBI Taxonomy" id="272569"/>
    <lineage>
        <taxon>Archaea</taxon>
        <taxon>Methanobacteriati</taxon>
        <taxon>Methanobacteriota</taxon>
        <taxon>Stenosarchaea group</taxon>
        <taxon>Halobacteria</taxon>
        <taxon>Halobacteriales</taxon>
        <taxon>Haloarculaceae</taxon>
        <taxon>Haloarcula</taxon>
    </lineage>
</organism>
<comment type="function">
    <text evidence="1">Catalyzes the isomerization between 2-isopropylmalate and 3-isopropylmalate, via the formation of 2-isopropylmaleate.</text>
</comment>
<comment type="catalytic activity">
    <reaction evidence="1">
        <text>(2R,3S)-3-isopropylmalate = (2S)-2-isopropylmalate</text>
        <dbReference type="Rhea" id="RHEA:32287"/>
        <dbReference type="ChEBI" id="CHEBI:1178"/>
        <dbReference type="ChEBI" id="CHEBI:35121"/>
        <dbReference type="EC" id="4.2.1.33"/>
    </reaction>
</comment>
<comment type="cofactor">
    <cofactor evidence="1">
        <name>[4Fe-4S] cluster</name>
        <dbReference type="ChEBI" id="CHEBI:49883"/>
    </cofactor>
    <text evidence="1">Binds 1 [4Fe-4S] cluster per subunit.</text>
</comment>
<comment type="pathway">
    <text evidence="1">Amino-acid biosynthesis; L-leucine biosynthesis; L-leucine from 3-methyl-2-oxobutanoate: step 2/4.</text>
</comment>
<comment type="subunit">
    <text evidence="1">Heterodimer of LeuC and LeuD.</text>
</comment>
<comment type="similarity">
    <text evidence="1">Belongs to the aconitase/IPM isomerase family. LeuC type 1 subfamily.</text>
</comment>
<dbReference type="EC" id="4.2.1.33" evidence="1"/>
<dbReference type="EMBL" id="AY596297">
    <property type="protein sequence ID" value="AAV45384.1"/>
    <property type="molecule type" value="Genomic_DNA"/>
</dbReference>
<dbReference type="RefSeq" id="WP_011222967.1">
    <property type="nucleotide sequence ID" value="NC_006396.1"/>
</dbReference>
<dbReference type="SMR" id="Q5V518"/>
<dbReference type="STRING" id="272569.rrnAC0334"/>
<dbReference type="PaxDb" id="272569-rrnAC0334"/>
<dbReference type="DNASU" id="3128422"/>
<dbReference type="EnsemblBacteria" id="AAV45384">
    <property type="protein sequence ID" value="AAV45384"/>
    <property type="gene ID" value="rrnAC0334"/>
</dbReference>
<dbReference type="GeneID" id="40154624"/>
<dbReference type="KEGG" id="hma:rrnAC0334"/>
<dbReference type="PATRIC" id="fig|272569.17.peg.1124"/>
<dbReference type="eggNOG" id="arCOG01698">
    <property type="taxonomic scope" value="Archaea"/>
</dbReference>
<dbReference type="HOGENOM" id="CLU_006714_3_4_2"/>
<dbReference type="UniPathway" id="UPA00048">
    <property type="reaction ID" value="UER00071"/>
</dbReference>
<dbReference type="Proteomes" id="UP000001169">
    <property type="component" value="Chromosome I"/>
</dbReference>
<dbReference type="GO" id="GO:0003861">
    <property type="term" value="F:3-isopropylmalate dehydratase activity"/>
    <property type="evidence" value="ECO:0007669"/>
    <property type="project" value="UniProtKB-UniRule"/>
</dbReference>
<dbReference type="GO" id="GO:0051539">
    <property type="term" value="F:4 iron, 4 sulfur cluster binding"/>
    <property type="evidence" value="ECO:0007669"/>
    <property type="project" value="UniProtKB-KW"/>
</dbReference>
<dbReference type="GO" id="GO:0046872">
    <property type="term" value="F:metal ion binding"/>
    <property type="evidence" value="ECO:0007669"/>
    <property type="project" value="UniProtKB-KW"/>
</dbReference>
<dbReference type="GO" id="GO:0009098">
    <property type="term" value="P:L-leucine biosynthetic process"/>
    <property type="evidence" value="ECO:0007669"/>
    <property type="project" value="UniProtKB-UniRule"/>
</dbReference>
<dbReference type="CDD" id="cd01583">
    <property type="entry name" value="IPMI"/>
    <property type="match status" value="1"/>
</dbReference>
<dbReference type="Gene3D" id="3.30.499.10">
    <property type="entry name" value="Aconitase, domain 3"/>
    <property type="match status" value="2"/>
</dbReference>
<dbReference type="HAMAP" id="MF_01026">
    <property type="entry name" value="LeuC_type1"/>
    <property type="match status" value="1"/>
</dbReference>
<dbReference type="InterPro" id="IPR004430">
    <property type="entry name" value="3-IsopropMal_deHydase_lsu"/>
</dbReference>
<dbReference type="InterPro" id="IPR015931">
    <property type="entry name" value="Acnase/IPM_dHydase_lsu_aba_1/3"/>
</dbReference>
<dbReference type="InterPro" id="IPR001030">
    <property type="entry name" value="Acoase/IPM_deHydtase_lsu_aba"/>
</dbReference>
<dbReference type="InterPro" id="IPR018136">
    <property type="entry name" value="Aconitase_4Fe-4S_BS"/>
</dbReference>
<dbReference type="InterPro" id="IPR036008">
    <property type="entry name" value="Aconitase_4Fe-4S_dom"/>
</dbReference>
<dbReference type="InterPro" id="IPR050067">
    <property type="entry name" value="IPM_dehydratase_rel_enz"/>
</dbReference>
<dbReference type="InterPro" id="IPR033941">
    <property type="entry name" value="IPMI_cat"/>
</dbReference>
<dbReference type="NCBIfam" id="TIGR00170">
    <property type="entry name" value="leuC"/>
    <property type="match status" value="1"/>
</dbReference>
<dbReference type="NCBIfam" id="NF004016">
    <property type="entry name" value="PRK05478.1"/>
    <property type="match status" value="1"/>
</dbReference>
<dbReference type="NCBIfam" id="NF009116">
    <property type="entry name" value="PRK12466.1"/>
    <property type="match status" value="1"/>
</dbReference>
<dbReference type="PANTHER" id="PTHR43822:SF9">
    <property type="entry name" value="3-ISOPROPYLMALATE DEHYDRATASE"/>
    <property type="match status" value="1"/>
</dbReference>
<dbReference type="PANTHER" id="PTHR43822">
    <property type="entry name" value="HOMOACONITASE, MITOCHONDRIAL-RELATED"/>
    <property type="match status" value="1"/>
</dbReference>
<dbReference type="Pfam" id="PF00330">
    <property type="entry name" value="Aconitase"/>
    <property type="match status" value="1"/>
</dbReference>
<dbReference type="PRINTS" id="PR00415">
    <property type="entry name" value="ACONITASE"/>
</dbReference>
<dbReference type="SUPFAM" id="SSF53732">
    <property type="entry name" value="Aconitase iron-sulfur domain"/>
    <property type="match status" value="1"/>
</dbReference>
<dbReference type="PROSITE" id="PS00450">
    <property type="entry name" value="ACONITASE_1"/>
    <property type="match status" value="1"/>
</dbReference>
<dbReference type="PROSITE" id="PS01244">
    <property type="entry name" value="ACONITASE_2"/>
    <property type="match status" value="1"/>
</dbReference>
<reference key="1">
    <citation type="journal article" date="2004" name="Genome Res.">
        <title>Genome sequence of Haloarcula marismortui: a halophilic archaeon from the Dead Sea.</title>
        <authorList>
            <person name="Baliga N.S."/>
            <person name="Bonneau R."/>
            <person name="Facciotti M.T."/>
            <person name="Pan M."/>
            <person name="Glusman G."/>
            <person name="Deutsch E.W."/>
            <person name="Shannon P."/>
            <person name="Chiu Y."/>
            <person name="Weng R.S."/>
            <person name="Gan R.R."/>
            <person name="Hung P."/>
            <person name="Date S.V."/>
            <person name="Marcotte E."/>
            <person name="Hood L."/>
            <person name="Ng W.V."/>
        </authorList>
    </citation>
    <scope>NUCLEOTIDE SEQUENCE [LARGE SCALE GENOMIC DNA]</scope>
    <source>
        <strain>ATCC 43049 / DSM 3752 / JCM 8966 / VKM B-1809</strain>
    </source>
</reference>
<protein>
    <recommendedName>
        <fullName evidence="1">3-isopropylmalate dehydratase large subunit</fullName>
        <ecNumber evidence="1">4.2.1.33</ecNumber>
    </recommendedName>
    <alternativeName>
        <fullName evidence="1">Alpha-IPM isomerase</fullName>
        <shortName evidence="1">IPMI</shortName>
    </alternativeName>
    <alternativeName>
        <fullName evidence="1">Isopropylmalate isomerase</fullName>
    </alternativeName>
</protein>
<name>LEUC_HALMA</name>